<comment type="function">
    <text evidence="1">Specifically methylates the guanine in position 1207 of 16S rRNA in the 30S particle.</text>
</comment>
<comment type="catalytic activity">
    <reaction evidence="1">
        <text>guanosine(1207) in 16S rRNA + S-adenosyl-L-methionine = N(2)-methylguanosine(1207) in 16S rRNA + S-adenosyl-L-homocysteine + H(+)</text>
        <dbReference type="Rhea" id="RHEA:42736"/>
        <dbReference type="Rhea" id="RHEA-COMP:10213"/>
        <dbReference type="Rhea" id="RHEA-COMP:10214"/>
        <dbReference type="ChEBI" id="CHEBI:15378"/>
        <dbReference type="ChEBI" id="CHEBI:57856"/>
        <dbReference type="ChEBI" id="CHEBI:59789"/>
        <dbReference type="ChEBI" id="CHEBI:74269"/>
        <dbReference type="ChEBI" id="CHEBI:74481"/>
        <dbReference type="EC" id="2.1.1.172"/>
    </reaction>
</comment>
<comment type="subunit">
    <text evidence="1">Monomer.</text>
</comment>
<comment type="subcellular location">
    <subcellularLocation>
        <location evidence="1">Cytoplasm</location>
    </subcellularLocation>
</comment>
<comment type="similarity">
    <text evidence="1">Belongs to the methyltransferase superfamily. RsmC family.</text>
</comment>
<evidence type="ECO:0000255" key="1">
    <source>
        <dbReference type="HAMAP-Rule" id="MF_01862"/>
    </source>
</evidence>
<reference key="1">
    <citation type="journal article" date="2005" name="Nucleic Acids Res.">
        <title>Genome dynamics and diversity of Shigella species, the etiologic agents of bacillary dysentery.</title>
        <authorList>
            <person name="Yang F."/>
            <person name="Yang J."/>
            <person name="Zhang X."/>
            <person name="Chen L."/>
            <person name="Jiang Y."/>
            <person name="Yan Y."/>
            <person name="Tang X."/>
            <person name="Wang J."/>
            <person name="Xiong Z."/>
            <person name="Dong J."/>
            <person name="Xue Y."/>
            <person name="Zhu Y."/>
            <person name="Xu X."/>
            <person name="Sun L."/>
            <person name="Chen S."/>
            <person name="Nie H."/>
            <person name="Peng J."/>
            <person name="Xu J."/>
            <person name="Wang Y."/>
            <person name="Yuan Z."/>
            <person name="Wen Y."/>
            <person name="Yao Z."/>
            <person name="Shen Y."/>
            <person name="Qiang B."/>
            <person name="Hou Y."/>
            <person name="Yu J."/>
            <person name="Jin Q."/>
        </authorList>
    </citation>
    <scope>NUCLEOTIDE SEQUENCE [LARGE SCALE GENOMIC DNA]</scope>
    <source>
        <strain>Ss046</strain>
    </source>
</reference>
<dbReference type="EC" id="2.1.1.172" evidence="1"/>
<dbReference type="EMBL" id="CP000038">
    <property type="protein sequence ID" value="AAZ90989.1"/>
    <property type="molecule type" value="Genomic_DNA"/>
</dbReference>
<dbReference type="RefSeq" id="WP_001272342.1">
    <property type="nucleotide sequence ID" value="NC_007384.1"/>
</dbReference>
<dbReference type="SMR" id="Q3YU23"/>
<dbReference type="GeneID" id="93777474"/>
<dbReference type="KEGG" id="ssn:SSON_4521"/>
<dbReference type="HOGENOM" id="CLU_049581_0_1_6"/>
<dbReference type="Proteomes" id="UP000002529">
    <property type="component" value="Chromosome"/>
</dbReference>
<dbReference type="GO" id="GO:0005737">
    <property type="term" value="C:cytoplasm"/>
    <property type="evidence" value="ECO:0007669"/>
    <property type="project" value="UniProtKB-SubCell"/>
</dbReference>
<dbReference type="GO" id="GO:0052914">
    <property type="term" value="F:16S rRNA (guanine(1207)-N(2))-methyltransferase activity"/>
    <property type="evidence" value="ECO:0007669"/>
    <property type="project" value="UniProtKB-EC"/>
</dbReference>
<dbReference type="GO" id="GO:0003676">
    <property type="term" value="F:nucleic acid binding"/>
    <property type="evidence" value="ECO:0007669"/>
    <property type="project" value="InterPro"/>
</dbReference>
<dbReference type="CDD" id="cd02440">
    <property type="entry name" value="AdoMet_MTases"/>
    <property type="match status" value="1"/>
</dbReference>
<dbReference type="FunFam" id="3.40.50.150:FF:000058">
    <property type="entry name" value="Ribosomal RNA small subunit methyltransferase C"/>
    <property type="match status" value="1"/>
</dbReference>
<dbReference type="FunFam" id="3.40.50.150:FF:000063">
    <property type="entry name" value="Ribosomal RNA small subunit methyltransferase C"/>
    <property type="match status" value="1"/>
</dbReference>
<dbReference type="Gene3D" id="3.40.50.150">
    <property type="entry name" value="Vaccinia Virus protein VP39"/>
    <property type="match status" value="2"/>
</dbReference>
<dbReference type="HAMAP" id="MF_01862">
    <property type="entry name" value="16SrRNA_methyltr_C"/>
    <property type="match status" value="1"/>
</dbReference>
<dbReference type="InterPro" id="IPR002052">
    <property type="entry name" value="DNA_methylase_N6_adenine_CS"/>
</dbReference>
<dbReference type="InterPro" id="IPR013675">
    <property type="entry name" value="Mtase_sm_N"/>
</dbReference>
<dbReference type="InterPro" id="IPR023543">
    <property type="entry name" value="rRNA_ssu_MeTfrase_C"/>
</dbReference>
<dbReference type="InterPro" id="IPR046977">
    <property type="entry name" value="RsmC/RlmG"/>
</dbReference>
<dbReference type="InterPro" id="IPR029063">
    <property type="entry name" value="SAM-dependent_MTases_sf"/>
</dbReference>
<dbReference type="InterPro" id="IPR007848">
    <property type="entry name" value="Small_mtfrase_dom"/>
</dbReference>
<dbReference type="NCBIfam" id="NF007023">
    <property type="entry name" value="PRK09489.1"/>
    <property type="match status" value="1"/>
</dbReference>
<dbReference type="PANTHER" id="PTHR47816">
    <property type="entry name" value="RIBOSOMAL RNA SMALL SUBUNIT METHYLTRANSFERASE C"/>
    <property type="match status" value="1"/>
</dbReference>
<dbReference type="PANTHER" id="PTHR47816:SF4">
    <property type="entry name" value="RIBOSOMAL RNA SMALL SUBUNIT METHYLTRANSFERASE C"/>
    <property type="match status" value="1"/>
</dbReference>
<dbReference type="Pfam" id="PF05175">
    <property type="entry name" value="MTS"/>
    <property type="match status" value="1"/>
</dbReference>
<dbReference type="Pfam" id="PF08468">
    <property type="entry name" value="MTS_N"/>
    <property type="match status" value="1"/>
</dbReference>
<dbReference type="SUPFAM" id="SSF53335">
    <property type="entry name" value="S-adenosyl-L-methionine-dependent methyltransferases"/>
    <property type="match status" value="1"/>
</dbReference>
<name>RSMC_SHISS</name>
<accession>Q3YU23</accession>
<proteinExistence type="inferred from homology"/>
<sequence length="343" mass="37685">MSAFTPASEVLLRHSDDFEQSRILFAGDLQDDLPARLDTAASRAHTQQFHHWQVLSRQMGDNARFSLVATVDDVADCDTLIYYWPKNKPEAQFQLMNLLSLLPVGTDIFVVGENRSGVRSAEQMLADYAPLNKVDSARRCGLYFGRLEKQPVFDADKFWGEYSVDGLTVKTLPGVFSRDGLDVGSQLLLSTLTPHTKGKVLDVGCGAGVLSVAFARHSPKIRLTLCDVSAPAVEASRATLAANCVEGEVFASNVFSEVKGRFDMIISNPPFHDGMQTSLDAAQTLIRGAVRHLNSGGELRIVANAFLPYPDVLDETFGFHEVIAQTGRFKVYRAIMTRQAKKG</sequence>
<keyword id="KW-0963">Cytoplasm</keyword>
<keyword id="KW-0489">Methyltransferase</keyword>
<keyword id="KW-1185">Reference proteome</keyword>
<keyword id="KW-0698">rRNA processing</keyword>
<keyword id="KW-0949">S-adenosyl-L-methionine</keyword>
<keyword id="KW-0808">Transferase</keyword>
<organism>
    <name type="scientific">Shigella sonnei (strain Ss046)</name>
    <dbReference type="NCBI Taxonomy" id="300269"/>
    <lineage>
        <taxon>Bacteria</taxon>
        <taxon>Pseudomonadati</taxon>
        <taxon>Pseudomonadota</taxon>
        <taxon>Gammaproteobacteria</taxon>
        <taxon>Enterobacterales</taxon>
        <taxon>Enterobacteriaceae</taxon>
        <taxon>Shigella</taxon>
    </lineage>
</organism>
<gene>
    <name evidence="1" type="primary">rsmC</name>
    <name type="ordered locus">SSON_4521</name>
</gene>
<feature type="chain" id="PRO_0000369789" description="Ribosomal RNA small subunit methyltransferase C">
    <location>
        <begin position="1"/>
        <end position="343"/>
    </location>
</feature>
<protein>
    <recommendedName>
        <fullName evidence="1">Ribosomal RNA small subunit methyltransferase C</fullName>
        <ecNumber evidence="1">2.1.1.172</ecNumber>
    </recommendedName>
    <alternativeName>
        <fullName evidence="1">16S rRNA m2G1207 methyltransferase</fullName>
    </alternativeName>
    <alternativeName>
        <fullName evidence="1">rRNA (guanine-N(2)-)-methyltransferase RsmC</fullName>
    </alternativeName>
</protein>